<gene>
    <name type="ordered locus">Bphy_3740</name>
</gene>
<evidence type="ECO:0000255" key="1">
    <source>
        <dbReference type="HAMAP-Rule" id="MF_01685"/>
    </source>
</evidence>
<accession>B2JN27</accession>
<organism>
    <name type="scientific">Paraburkholderia phymatum (strain DSM 17167 / CIP 108236 / LMG 21445 / STM815)</name>
    <name type="common">Burkholderia phymatum</name>
    <dbReference type="NCBI Taxonomy" id="391038"/>
    <lineage>
        <taxon>Bacteria</taxon>
        <taxon>Pseudomonadati</taxon>
        <taxon>Pseudomonadota</taxon>
        <taxon>Betaproteobacteria</taxon>
        <taxon>Burkholderiales</taxon>
        <taxon>Burkholderiaceae</taxon>
        <taxon>Paraburkholderia</taxon>
    </lineage>
</organism>
<proteinExistence type="inferred from homology"/>
<sequence>MTSSANIATDSPANTDVLIIGAGPVGLFAAFEAGVIGLSSVIVDNVERAGGQCIELYPDKPIYDIPAIPSCTARELVDRLLEQCRPFAPPLHLGHRVDTVEQLDNGRWLARTDKGLTVESAAILIAAGNGSFVPQRLQLDDAAPLEGHYVHYSVSNLADFAGKKMVVAGGGDSALDWALALRTVAQHVTLVHRRNGFSATDSSVANMRRAVEAGEMNFAVGTIASLNAPGGQLESIELRQAEGSVQLATDHLLVLFGLVADLGPIQQWGVEVRGGRITVDTSNYESSRPGIFAAGDIAGYPNKQKLILSGFHEASLALRKAYSYAYPDKKRVHIHSSYDAKLAERVAASHT</sequence>
<protein>
    <recommendedName>
        <fullName evidence="1">Ferredoxin--NADP reductase</fullName>
        <shortName evidence="1">FNR</shortName>
        <shortName evidence="1">Fd-NADP(+) reductase</shortName>
        <ecNumber evidence="1">1.18.1.2</ecNumber>
    </recommendedName>
</protein>
<comment type="catalytic activity">
    <reaction evidence="1">
        <text>2 reduced [2Fe-2S]-[ferredoxin] + NADP(+) + H(+) = 2 oxidized [2Fe-2S]-[ferredoxin] + NADPH</text>
        <dbReference type="Rhea" id="RHEA:20125"/>
        <dbReference type="Rhea" id="RHEA-COMP:10000"/>
        <dbReference type="Rhea" id="RHEA-COMP:10001"/>
        <dbReference type="ChEBI" id="CHEBI:15378"/>
        <dbReference type="ChEBI" id="CHEBI:33737"/>
        <dbReference type="ChEBI" id="CHEBI:33738"/>
        <dbReference type="ChEBI" id="CHEBI:57783"/>
        <dbReference type="ChEBI" id="CHEBI:58349"/>
        <dbReference type="EC" id="1.18.1.2"/>
    </reaction>
</comment>
<comment type="cofactor">
    <cofactor evidence="1">
        <name>FAD</name>
        <dbReference type="ChEBI" id="CHEBI:57692"/>
    </cofactor>
    <text evidence="1">Binds 1 FAD per subunit.</text>
</comment>
<comment type="subunit">
    <text evidence="1">Homodimer.</text>
</comment>
<comment type="similarity">
    <text evidence="1">Belongs to the ferredoxin--NADP reductase type 2 family.</text>
</comment>
<dbReference type="EC" id="1.18.1.2" evidence="1"/>
<dbReference type="EMBL" id="CP001044">
    <property type="protein sequence ID" value="ACC72875.1"/>
    <property type="molecule type" value="Genomic_DNA"/>
</dbReference>
<dbReference type="RefSeq" id="WP_012403048.1">
    <property type="nucleotide sequence ID" value="NC_010623.1"/>
</dbReference>
<dbReference type="SMR" id="B2JN27"/>
<dbReference type="STRING" id="391038.Bphy_3740"/>
<dbReference type="KEGG" id="bph:Bphy_3740"/>
<dbReference type="eggNOG" id="COG0492">
    <property type="taxonomic scope" value="Bacteria"/>
</dbReference>
<dbReference type="HOGENOM" id="CLU_031864_5_5_4"/>
<dbReference type="OrthoDB" id="9806179at2"/>
<dbReference type="Proteomes" id="UP000001192">
    <property type="component" value="Chromosome 2"/>
</dbReference>
<dbReference type="GO" id="GO:0004324">
    <property type="term" value="F:ferredoxin-NADP+ reductase activity"/>
    <property type="evidence" value="ECO:0007669"/>
    <property type="project" value="UniProtKB-UniRule"/>
</dbReference>
<dbReference type="GO" id="GO:0050660">
    <property type="term" value="F:flavin adenine dinucleotide binding"/>
    <property type="evidence" value="ECO:0007669"/>
    <property type="project" value="UniProtKB-UniRule"/>
</dbReference>
<dbReference type="GO" id="GO:0050661">
    <property type="term" value="F:NADP binding"/>
    <property type="evidence" value="ECO:0007669"/>
    <property type="project" value="UniProtKB-UniRule"/>
</dbReference>
<dbReference type="Gene3D" id="3.50.50.60">
    <property type="entry name" value="FAD/NAD(P)-binding domain"/>
    <property type="match status" value="2"/>
</dbReference>
<dbReference type="HAMAP" id="MF_01685">
    <property type="entry name" value="FENR2"/>
    <property type="match status" value="1"/>
</dbReference>
<dbReference type="InterPro" id="IPR036188">
    <property type="entry name" value="FAD/NAD-bd_sf"/>
</dbReference>
<dbReference type="InterPro" id="IPR023753">
    <property type="entry name" value="FAD/NAD-binding_dom"/>
</dbReference>
<dbReference type="InterPro" id="IPR022890">
    <property type="entry name" value="Fd--NADP_Rdtase_type_2"/>
</dbReference>
<dbReference type="InterPro" id="IPR050097">
    <property type="entry name" value="Ferredoxin-NADP_redctase_2"/>
</dbReference>
<dbReference type="PANTHER" id="PTHR48105">
    <property type="entry name" value="THIOREDOXIN REDUCTASE 1-RELATED-RELATED"/>
    <property type="match status" value="1"/>
</dbReference>
<dbReference type="Pfam" id="PF07992">
    <property type="entry name" value="Pyr_redox_2"/>
    <property type="match status" value="1"/>
</dbReference>
<dbReference type="PRINTS" id="PR00368">
    <property type="entry name" value="FADPNR"/>
</dbReference>
<dbReference type="PRINTS" id="PR00469">
    <property type="entry name" value="PNDRDTASEII"/>
</dbReference>
<dbReference type="SUPFAM" id="SSF51905">
    <property type="entry name" value="FAD/NAD(P)-binding domain"/>
    <property type="match status" value="1"/>
</dbReference>
<keyword id="KW-0274">FAD</keyword>
<keyword id="KW-0285">Flavoprotein</keyword>
<keyword id="KW-0521">NADP</keyword>
<keyword id="KW-0560">Oxidoreductase</keyword>
<keyword id="KW-1185">Reference proteome</keyword>
<feature type="chain" id="PRO_0000364812" description="Ferredoxin--NADP reductase">
    <location>
        <begin position="1"/>
        <end position="351"/>
    </location>
</feature>
<feature type="binding site" evidence="1">
    <location>
        <position position="44"/>
    </location>
    <ligand>
        <name>FAD</name>
        <dbReference type="ChEBI" id="CHEBI:57692"/>
    </ligand>
</feature>
<feature type="binding site" evidence="1">
    <location>
        <position position="52"/>
    </location>
    <ligand>
        <name>FAD</name>
        <dbReference type="ChEBI" id="CHEBI:57692"/>
    </ligand>
</feature>
<feature type="binding site" evidence="1">
    <location>
        <position position="57"/>
    </location>
    <ligand>
        <name>FAD</name>
        <dbReference type="ChEBI" id="CHEBI:57692"/>
    </ligand>
</feature>
<feature type="binding site" evidence="1">
    <location>
        <position position="97"/>
    </location>
    <ligand>
        <name>FAD</name>
        <dbReference type="ChEBI" id="CHEBI:57692"/>
    </ligand>
</feature>
<feature type="binding site" evidence="1">
    <location>
        <position position="132"/>
    </location>
    <ligand>
        <name>FAD</name>
        <dbReference type="ChEBI" id="CHEBI:57692"/>
    </ligand>
</feature>
<feature type="binding site" evidence="1">
    <location>
        <position position="296"/>
    </location>
    <ligand>
        <name>FAD</name>
        <dbReference type="ChEBI" id="CHEBI:57692"/>
    </ligand>
</feature>
<feature type="binding site" evidence="1">
    <location>
        <position position="337"/>
    </location>
    <ligand>
        <name>FAD</name>
        <dbReference type="ChEBI" id="CHEBI:57692"/>
    </ligand>
</feature>
<name>FENR_PARP8</name>
<reference key="1">
    <citation type="journal article" date="2014" name="Stand. Genomic Sci.">
        <title>Complete genome sequence of Burkholderia phymatum STM815(T), a broad host range and efficient nitrogen-fixing symbiont of Mimosa species.</title>
        <authorList>
            <person name="Moulin L."/>
            <person name="Klonowska A."/>
            <person name="Caroline B."/>
            <person name="Booth K."/>
            <person name="Vriezen J.A."/>
            <person name="Melkonian R."/>
            <person name="James E.K."/>
            <person name="Young J.P."/>
            <person name="Bena G."/>
            <person name="Hauser L."/>
            <person name="Land M."/>
            <person name="Kyrpides N."/>
            <person name="Bruce D."/>
            <person name="Chain P."/>
            <person name="Copeland A."/>
            <person name="Pitluck S."/>
            <person name="Woyke T."/>
            <person name="Lizotte-Waniewski M."/>
            <person name="Bristow J."/>
            <person name="Riley M."/>
        </authorList>
    </citation>
    <scope>NUCLEOTIDE SEQUENCE [LARGE SCALE GENOMIC DNA]</scope>
    <source>
        <strain>DSM 17167 / CIP 108236 / LMG 21445 / STM815</strain>
    </source>
</reference>